<organism>
    <name type="scientific">Rubrobacter xylanophilus (strain DSM 9941 / JCM 11954 / NBRC 16129 / PRD-1)</name>
    <dbReference type="NCBI Taxonomy" id="266117"/>
    <lineage>
        <taxon>Bacteria</taxon>
        <taxon>Bacillati</taxon>
        <taxon>Actinomycetota</taxon>
        <taxon>Rubrobacteria</taxon>
        <taxon>Rubrobacterales</taxon>
        <taxon>Rubrobacteraceae</taxon>
        <taxon>Rubrobacter</taxon>
    </lineage>
</organism>
<feature type="chain" id="PRO_1000025356" description="Co-chaperonin GroES">
    <location>
        <begin position="1"/>
        <end position="88"/>
    </location>
</feature>
<gene>
    <name evidence="1" type="primary">groES</name>
    <name evidence="1" type="synonym">groS</name>
    <name type="ordered locus">Rxyl_2295</name>
</gene>
<comment type="function">
    <text evidence="1">Together with the chaperonin GroEL, plays an essential role in assisting protein folding. The GroEL-GroES system forms a nano-cage that allows encapsulation of the non-native substrate proteins and provides a physical environment optimized to promote and accelerate protein folding. GroES binds to the apical surface of the GroEL ring, thereby capping the opening of the GroEL channel.</text>
</comment>
<comment type="subunit">
    <text evidence="1">Heptamer of 7 subunits arranged in a ring. Interacts with the chaperonin GroEL.</text>
</comment>
<comment type="subcellular location">
    <subcellularLocation>
        <location evidence="1">Cytoplasm</location>
    </subcellularLocation>
</comment>
<comment type="similarity">
    <text evidence="1">Belongs to the GroES chaperonin family.</text>
</comment>
<evidence type="ECO:0000255" key="1">
    <source>
        <dbReference type="HAMAP-Rule" id="MF_00580"/>
    </source>
</evidence>
<accession>Q1ATQ4</accession>
<name>CH10_RUBXD</name>
<reference key="1">
    <citation type="submission" date="2006-06" db="EMBL/GenBank/DDBJ databases">
        <title>Complete sequence of Rubrobacter xylanophilus DSM 9941.</title>
        <authorList>
            <consortium name="US DOE Joint Genome Institute"/>
            <person name="Copeland A."/>
            <person name="Lucas S."/>
            <person name="Lapidus A."/>
            <person name="Barry K."/>
            <person name="Detter J.C."/>
            <person name="Glavina del Rio T."/>
            <person name="Hammon N."/>
            <person name="Israni S."/>
            <person name="Dalin E."/>
            <person name="Tice H."/>
            <person name="Pitluck S."/>
            <person name="Munk A.C."/>
            <person name="Brettin T."/>
            <person name="Bruce D."/>
            <person name="Han C."/>
            <person name="Tapia R."/>
            <person name="Gilna P."/>
            <person name="Schmutz J."/>
            <person name="Larimer F."/>
            <person name="Land M."/>
            <person name="Hauser L."/>
            <person name="Kyrpides N."/>
            <person name="Lykidis A."/>
            <person name="da Costa M.S."/>
            <person name="Rainey F.A."/>
            <person name="Empadinhas N."/>
            <person name="Jolivet E."/>
            <person name="Battista J.R."/>
            <person name="Richardson P."/>
        </authorList>
    </citation>
    <scope>NUCLEOTIDE SEQUENCE [LARGE SCALE GENOMIC DNA]</scope>
    <source>
        <strain>DSM 9941 / JCM 11954 / NBRC 16129 / PRD-1</strain>
    </source>
</reference>
<proteinExistence type="inferred from homology"/>
<dbReference type="EMBL" id="CP000386">
    <property type="protein sequence ID" value="ABG05224.1"/>
    <property type="molecule type" value="Genomic_DNA"/>
</dbReference>
<dbReference type="RefSeq" id="WP_011565238.1">
    <property type="nucleotide sequence ID" value="NC_008148.1"/>
</dbReference>
<dbReference type="SMR" id="Q1ATQ4"/>
<dbReference type="STRING" id="266117.Rxyl_2295"/>
<dbReference type="KEGG" id="rxy:Rxyl_2295"/>
<dbReference type="eggNOG" id="COG0234">
    <property type="taxonomic scope" value="Bacteria"/>
</dbReference>
<dbReference type="HOGENOM" id="CLU_132825_2_0_11"/>
<dbReference type="OrthoDB" id="9806791at2"/>
<dbReference type="PhylomeDB" id="Q1ATQ4"/>
<dbReference type="Proteomes" id="UP000006637">
    <property type="component" value="Chromosome"/>
</dbReference>
<dbReference type="GO" id="GO:0005737">
    <property type="term" value="C:cytoplasm"/>
    <property type="evidence" value="ECO:0007669"/>
    <property type="project" value="UniProtKB-SubCell"/>
</dbReference>
<dbReference type="GO" id="GO:0005524">
    <property type="term" value="F:ATP binding"/>
    <property type="evidence" value="ECO:0007669"/>
    <property type="project" value="InterPro"/>
</dbReference>
<dbReference type="GO" id="GO:0046872">
    <property type="term" value="F:metal ion binding"/>
    <property type="evidence" value="ECO:0007669"/>
    <property type="project" value="TreeGrafter"/>
</dbReference>
<dbReference type="GO" id="GO:0044183">
    <property type="term" value="F:protein folding chaperone"/>
    <property type="evidence" value="ECO:0007669"/>
    <property type="project" value="InterPro"/>
</dbReference>
<dbReference type="GO" id="GO:0051087">
    <property type="term" value="F:protein-folding chaperone binding"/>
    <property type="evidence" value="ECO:0007669"/>
    <property type="project" value="TreeGrafter"/>
</dbReference>
<dbReference type="GO" id="GO:0051082">
    <property type="term" value="F:unfolded protein binding"/>
    <property type="evidence" value="ECO:0007669"/>
    <property type="project" value="TreeGrafter"/>
</dbReference>
<dbReference type="GO" id="GO:0051085">
    <property type="term" value="P:chaperone cofactor-dependent protein refolding"/>
    <property type="evidence" value="ECO:0007669"/>
    <property type="project" value="TreeGrafter"/>
</dbReference>
<dbReference type="CDD" id="cd00320">
    <property type="entry name" value="cpn10"/>
    <property type="match status" value="1"/>
</dbReference>
<dbReference type="FunFam" id="2.30.33.40:FF:000001">
    <property type="entry name" value="10 kDa chaperonin"/>
    <property type="match status" value="1"/>
</dbReference>
<dbReference type="Gene3D" id="2.30.33.40">
    <property type="entry name" value="GroES chaperonin"/>
    <property type="match status" value="1"/>
</dbReference>
<dbReference type="HAMAP" id="MF_00580">
    <property type="entry name" value="CH10"/>
    <property type="match status" value="1"/>
</dbReference>
<dbReference type="InterPro" id="IPR020818">
    <property type="entry name" value="Chaperonin_GroES"/>
</dbReference>
<dbReference type="InterPro" id="IPR037124">
    <property type="entry name" value="Chaperonin_GroES_sf"/>
</dbReference>
<dbReference type="InterPro" id="IPR018369">
    <property type="entry name" value="Chaprnonin_Cpn10_CS"/>
</dbReference>
<dbReference type="InterPro" id="IPR011032">
    <property type="entry name" value="GroES-like_sf"/>
</dbReference>
<dbReference type="NCBIfam" id="NF001531">
    <property type="entry name" value="PRK00364.2-2"/>
    <property type="match status" value="1"/>
</dbReference>
<dbReference type="NCBIfam" id="NF001537">
    <property type="entry name" value="PRK00364.3-3"/>
    <property type="match status" value="1"/>
</dbReference>
<dbReference type="PANTHER" id="PTHR10772">
    <property type="entry name" value="10 KDA HEAT SHOCK PROTEIN"/>
    <property type="match status" value="1"/>
</dbReference>
<dbReference type="PANTHER" id="PTHR10772:SF63">
    <property type="entry name" value="20 KDA CHAPERONIN, CHLOROPLASTIC"/>
    <property type="match status" value="1"/>
</dbReference>
<dbReference type="Pfam" id="PF00166">
    <property type="entry name" value="Cpn10"/>
    <property type="match status" value="1"/>
</dbReference>
<dbReference type="PRINTS" id="PR00297">
    <property type="entry name" value="CHAPERONIN10"/>
</dbReference>
<dbReference type="SMART" id="SM00883">
    <property type="entry name" value="Cpn10"/>
    <property type="match status" value="1"/>
</dbReference>
<dbReference type="SUPFAM" id="SSF50129">
    <property type="entry name" value="GroES-like"/>
    <property type="match status" value="1"/>
</dbReference>
<dbReference type="PROSITE" id="PS00681">
    <property type="entry name" value="CHAPERONINS_CPN10"/>
    <property type="match status" value="1"/>
</dbReference>
<sequence length="88" mass="9568">MKFKPLGERALVKLVEREEKTASGIVLPDTAKEKPQTAEVIAVGDSEDIKVKEGDVVVFAKYSGTEISLNGDDYMILDADDILGVVEE</sequence>
<keyword id="KW-0143">Chaperone</keyword>
<keyword id="KW-0963">Cytoplasm</keyword>
<keyword id="KW-1185">Reference proteome</keyword>
<protein>
    <recommendedName>
        <fullName evidence="1">Co-chaperonin GroES</fullName>
    </recommendedName>
    <alternativeName>
        <fullName evidence="1">10 kDa chaperonin</fullName>
    </alternativeName>
    <alternativeName>
        <fullName evidence="1">Chaperonin-10</fullName>
        <shortName evidence="1">Cpn10</shortName>
    </alternativeName>
</protein>